<proteinExistence type="evidence at transcript level"/>
<protein>
    <recommendedName>
        <fullName evidence="1">Nucleotide sugar transporter SLC35D2</fullName>
    </recommendedName>
    <alternativeName>
        <fullName evidence="6">Solute carrier family 35 member D2</fullName>
    </alternativeName>
    <alternativeName>
        <fullName>UDP-galactose transporter-related protein 8</fullName>
        <shortName evidence="5">UGTrel8</shortName>
    </alternativeName>
</protein>
<gene>
    <name evidence="6" type="primary">Slc35d2</name>
    <name type="synonym">Ugtrel8</name>
</gene>
<sequence length="326" mass="35896">MEEPNAAPLPSRLARLLSALFYGTCSFLIVLVNKALLTTYGFPSPIVLGIGQMATTIMILYVFKLNKIIHFPDFDKKIPGKLFPLPLLYVGNHISGLSSTSKLSLPMFTVLRKFTIPFTLLLEAIILGTQYSLNIILSVLAIVLGAFIAAGSDLTFNLEGYVFVFLNDIFTAANGVYTKQKMDPKELGKYGVLFYNACFMLIPTVIISVSTGDFQQATEFRHWKNVLFIIQFLLSCLLGFLLMYSTALCSYYNSALTTAVVGAIKNVSVAYIGMLVGGDYIFSLLNFIGLNICMAGGLRYSFLTLSSQLKPKQPVDEESIPLDLKS</sequence>
<comment type="function">
    <text evidence="1">Nucleotide sugar antiporter transporting UDP-N-acetylglucosamine (UDP-GlcNAc) and UDP-glucose (UDP-Glc) from the cytosol into the lumen of the Golgi in exchange of UMP. By supplying UDP-N-acetylglucosamine, a donor substrate to heparan sulfate synthases, probably takes part in the synthesis of these glycoconjugates.</text>
</comment>
<comment type="catalytic activity">
    <reaction evidence="1">
        <text>UMP(out) + UDP-N-acetyl-alpha-D-glucosamine(in) = UMP(in) + UDP-N-acetyl-alpha-D-glucosamine(out)</text>
        <dbReference type="Rhea" id="RHEA:72695"/>
        <dbReference type="ChEBI" id="CHEBI:57705"/>
        <dbReference type="ChEBI" id="CHEBI:57865"/>
    </reaction>
</comment>
<comment type="catalytic activity">
    <reaction evidence="1">
        <text>UMP(out) + UDP-alpha-D-glucose(in) = UMP(in) + UDP-alpha-D-glucose(out)</text>
        <dbReference type="Rhea" id="RHEA:72731"/>
        <dbReference type="ChEBI" id="CHEBI:57865"/>
        <dbReference type="ChEBI" id="CHEBI:58885"/>
    </reaction>
</comment>
<comment type="subcellular location">
    <subcellularLocation>
        <location evidence="1">Golgi apparatus membrane</location>
        <topology evidence="2">Multi-pass membrane protein</topology>
    </subcellularLocation>
</comment>
<comment type="alternative products">
    <event type="alternative splicing"/>
    <isoform>
        <id>Q762D5-1</id>
        <name>1</name>
        <sequence type="displayed"/>
    </isoform>
    <isoform>
        <id>Q762D5-2</id>
        <name>2</name>
        <sequence type="described" ref="VSP_030007 VSP_030008"/>
    </isoform>
</comment>
<comment type="similarity">
    <text evidence="4">Belongs to the TPT transporter family. SLC35D subfamily.</text>
</comment>
<accession>Q762D5</accession>
<accession>Q3TXR0</accession>
<accession>Q762D4</accession>
<accession>Q811G6</accession>
<name>S35D2_MOUSE</name>
<reference key="1">
    <citation type="submission" date="2003-08" db="EMBL/GenBank/DDBJ databases">
        <title>Targeted inactivation of the mouse UDP-glucuronic acid/UDP-N-acetylgalactosamine transporter gene.</title>
        <authorList>
            <person name="Hiraoka S."/>
            <person name="Ogawa M."/>
            <person name="Koseki H."/>
        </authorList>
    </citation>
    <scope>NUCLEOTIDE SEQUENCE [MRNA] (ISOFORMS 1 AND 2)</scope>
</reference>
<reference key="2">
    <citation type="journal article" date="2005" name="Science">
        <title>The transcriptional landscape of the mammalian genome.</title>
        <authorList>
            <person name="Carninci P."/>
            <person name="Kasukawa T."/>
            <person name="Katayama S."/>
            <person name="Gough J."/>
            <person name="Frith M.C."/>
            <person name="Maeda N."/>
            <person name="Oyama R."/>
            <person name="Ravasi T."/>
            <person name="Lenhard B."/>
            <person name="Wells C."/>
            <person name="Kodzius R."/>
            <person name="Shimokawa K."/>
            <person name="Bajic V.B."/>
            <person name="Brenner S.E."/>
            <person name="Batalov S."/>
            <person name="Forrest A.R."/>
            <person name="Zavolan M."/>
            <person name="Davis M.J."/>
            <person name="Wilming L.G."/>
            <person name="Aidinis V."/>
            <person name="Allen J.E."/>
            <person name="Ambesi-Impiombato A."/>
            <person name="Apweiler R."/>
            <person name="Aturaliya R.N."/>
            <person name="Bailey T.L."/>
            <person name="Bansal M."/>
            <person name="Baxter L."/>
            <person name="Beisel K.W."/>
            <person name="Bersano T."/>
            <person name="Bono H."/>
            <person name="Chalk A.M."/>
            <person name="Chiu K.P."/>
            <person name="Choudhary V."/>
            <person name="Christoffels A."/>
            <person name="Clutterbuck D.R."/>
            <person name="Crowe M.L."/>
            <person name="Dalla E."/>
            <person name="Dalrymple B.P."/>
            <person name="de Bono B."/>
            <person name="Della Gatta G."/>
            <person name="di Bernardo D."/>
            <person name="Down T."/>
            <person name="Engstrom P."/>
            <person name="Fagiolini M."/>
            <person name="Faulkner G."/>
            <person name="Fletcher C.F."/>
            <person name="Fukushima T."/>
            <person name="Furuno M."/>
            <person name="Futaki S."/>
            <person name="Gariboldi M."/>
            <person name="Georgii-Hemming P."/>
            <person name="Gingeras T.R."/>
            <person name="Gojobori T."/>
            <person name="Green R.E."/>
            <person name="Gustincich S."/>
            <person name="Harbers M."/>
            <person name="Hayashi Y."/>
            <person name="Hensch T.K."/>
            <person name="Hirokawa N."/>
            <person name="Hill D."/>
            <person name="Huminiecki L."/>
            <person name="Iacono M."/>
            <person name="Ikeo K."/>
            <person name="Iwama A."/>
            <person name="Ishikawa T."/>
            <person name="Jakt M."/>
            <person name="Kanapin A."/>
            <person name="Katoh M."/>
            <person name="Kawasawa Y."/>
            <person name="Kelso J."/>
            <person name="Kitamura H."/>
            <person name="Kitano H."/>
            <person name="Kollias G."/>
            <person name="Krishnan S.P."/>
            <person name="Kruger A."/>
            <person name="Kummerfeld S.K."/>
            <person name="Kurochkin I.V."/>
            <person name="Lareau L.F."/>
            <person name="Lazarevic D."/>
            <person name="Lipovich L."/>
            <person name="Liu J."/>
            <person name="Liuni S."/>
            <person name="McWilliam S."/>
            <person name="Madan Babu M."/>
            <person name="Madera M."/>
            <person name="Marchionni L."/>
            <person name="Matsuda H."/>
            <person name="Matsuzawa S."/>
            <person name="Miki H."/>
            <person name="Mignone F."/>
            <person name="Miyake S."/>
            <person name="Morris K."/>
            <person name="Mottagui-Tabar S."/>
            <person name="Mulder N."/>
            <person name="Nakano N."/>
            <person name="Nakauchi H."/>
            <person name="Ng P."/>
            <person name="Nilsson R."/>
            <person name="Nishiguchi S."/>
            <person name="Nishikawa S."/>
            <person name="Nori F."/>
            <person name="Ohara O."/>
            <person name="Okazaki Y."/>
            <person name="Orlando V."/>
            <person name="Pang K.C."/>
            <person name="Pavan W.J."/>
            <person name="Pavesi G."/>
            <person name="Pesole G."/>
            <person name="Petrovsky N."/>
            <person name="Piazza S."/>
            <person name="Reed J."/>
            <person name="Reid J.F."/>
            <person name="Ring B.Z."/>
            <person name="Ringwald M."/>
            <person name="Rost B."/>
            <person name="Ruan Y."/>
            <person name="Salzberg S.L."/>
            <person name="Sandelin A."/>
            <person name="Schneider C."/>
            <person name="Schoenbach C."/>
            <person name="Sekiguchi K."/>
            <person name="Semple C.A."/>
            <person name="Seno S."/>
            <person name="Sessa L."/>
            <person name="Sheng Y."/>
            <person name="Shibata Y."/>
            <person name="Shimada H."/>
            <person name="Shimada K."/>
            <person name="Silva D."/>
            <person name="Sinclair B."/>
            <person name="Sperling S."/>
            <person name="Stupka E."/>
            <person name="Sugiura K."/>
            <person name="Sultana R."/>
            <person name="Takenaka Y."/>
            <person name="Taki K."/>
            <person name="Tammoja K."/>
            <person name="Tan S.L."/>
            <person name="Tang S."/>
            <person name="Taylor M.S."/>
            <person name="Tegner J."/>
            <person name="Teichmann S.A."/>
            <person name="Ueda H.R."/>
            <person name="van Nimwegen E."/>
            <person name="Verardo R."/>
            <person name="Wei C.L."/>
            <person name="Yagi K."/>
            <person name="Yamanishi H."/>
            <person name="Zabarovsky E."/>
            <person name="Zhu S."/>
            <person name="Zimmer A."/>
            <person name="Hide W."/>
            <person name="Bult C."/>
            <person name="Grimmond S.M."/>
            <person name="Teasdale R.D."/>
            <person name="Liu E.T."/>
            <person name="Brusic V."/>
            <person name="Quackenbush J."/>
            <person name="Wahlestedt C."/>
            <person name="Mattick J.S."/>
            <person name="Hume D.A."/>
            <person name="Kai C."/>
            <person name="Sasaki D."/>
            <person name="Tomaru Y."/>
            <person name="Fukuda S."/>
            <person name="Kanamori-Katayama M."/>
            <person name="Suzuki M."/>
            <person name="Aoki J."/>
            <person name="Arakawa T."/>
            <person name="Iida J."/>
            <person name="Imamura K."/>
            <person name="Itoh M."/>
            <person name="Kato T."/>
            <person name="Kawaji H."/>
            <person name="Kawagashira N."/>
            <person name="Kawashima T."/>
            <person name="Kojima M."/>
            <person name="Kondo S."/>
            <person name="Konno H."/>
            <person name="Nakano K."/>
            <person name="Ninomiya N."/>
            <person name="Nishio T."/>
            <person name="Okada M."/>
            <person name="Plessy C."/>
            <person name="Shibata K."/>
            <person name="Shiraki T."/>
            <person name="Suzuki S."/>
            <person name="Tagami M."/>
            <person name="Waki K."/>
            <person name="Watahiki A."/>
            <person name="Okamura-Oho Y."/>
            <person name="Suzuki H."/>
            <person name="Kawai J."/>
            <person name="Hayashizaki Y."/>
        </authorList>
    </citation>
    <scope>NUCLEOTIDE SEQUENCE [LARGE SCALE MRNA] (ISOFORM 1)</scope>
    <source>
        <strain>C57BL/6J</strain>
        <strain>NOD</strain>
    </source>
</reference>
<reference key="3">
    <citation type="journal article" date="2004" name="Genome Res.">
        <title>The status, quality, and expansion of the NIH full-length cDNA project: the Mammalian Gene Collection (MGC).</title>
        <authorList>
            <consortium name="The MGC Project Team"/>
        </authorList>
    </citation>
    <scope>NUCLEOTIDE SEQUENCE [LARGE SCALE MRNA] (ISOFORM 1)</scope>
    <source>
        <strain>FVB/N</strain>
        <tissue>Mammary tumor</tissue>
    </source>
</reference>
<organism>
    <name type="scientific">Mus musculus</name>
    <name type="common">Mouse</name>
    <dbReference type="NCBI Taxonomy" id="10090"/>
    <lineage>
        <taxon>Eukaryota</taxon>
        <taxon>Metazoa</taxon>
        <taxon>Chordata</taxon>
        <taxon>Craniata</taxon>
        <taxon>Vertebrata</taxon>
        <taxon>Euteleostomi</taxon>
        <taxon>Mammalia</taxon>
        <taxon>Eutheria</taxon>
        <taxon>Euarchontoglires</taxon>
        <taxon>Glires</taxon>
        <taxon>Rodentia</taxon>
        <taxon>Myomorpha</taxon>
        <taxon>Muroidea</taxon>
        <taxon>Muridae</taxon>
        <taxon>Murinae</taxon>
        <taxon>Mus</taxon>
        <taxon>Mus</taxon>
    </lineage>
</organism>
<feature type="chain" id="PRO_0000313081" description="Nucleotide sugar transporter SLC35D2">
    <location>
        <begin position="1"/>
        <end position="326"/>
    </location>
</feature>
<feature type="topological domain" description="Extracellular" evidence="2">
    <location>
        <begin position="1"/>
        <end position="15"/>
    </location>
</feature>
<feature type="transmembrane region" description="Helical" evidence="2">
    <location>
        <begin position="16"/>
        <end position="36"/>
    </location>
</feature>
<feature type="topological domain" description="Cytoplasmic" evidence="2">
    <location>
        <begin position="37"/>
        <end position="41"/>
    </location>
</feature>
<feature type="transmembrane region" description="Helical" evidence="2">
    <location>
        <begin position="42"/>
        <end position="62"/>
    </location>
</feature>
<feature type="topological domain" description="Extracellular" evidence="2">
    <location>
        <begin position="63"/>
        <end position="130"/>
    </location>
</feature>
<feature type="transmembrane region" description="Helical" evidence="2">
    <location>
        <begin position="131"/>
        <end position="151"/>
    </location>
</feature>
<feature type="topological domain" description="Cytoplasmic" evidence="2">
    <location>
        <begin position="152"/>
        <end position="155"/>
    </location>
</feature>
<feature type="transmembrane region" description="Helical" evidence="2">
    <location>
        <begin position="156"/>
        <end position="176"/>
    </location>
</feature>
<feature type="topological domain" description="Extracellular" evidence="2">
    <location>
        <begin position="177"/>
        <end position="189"/>
    </location>
</feature>
<feature type="transmembrane region" description="Helical" evidence="2">
    <location>
        <begin position="190"/>
        <end position="210"/>
    </location>
</feature>
<feature type="topological domain" description="Cytoplasmic" evidence="2">
    <location>
        <begin position="211"/>
        <end position="225"/>
    </location>
</feature>
<feature type="transmembrane region" description="Helical" evidence="2">
    <location>
        <begin position="226"/>
        <end position="246"/>
    </location>
</feature>
<feature type="topological domain" description="Extracellular" evidence="2">
    <location>
        <begin position="247"/>
        <end position="253"/>
    </location>
</feature>
<feature type="transmembrane region" description="Helical" evidence="2">
    <location>
        <begin position="254"/>
        <end position="276"/>
    </location>
</feature>
<feature type="topological domain" description="Cytoplasmic" evidence="2">
    <location>
        <begin position="277"/>
        <end position="280"/>
    </location>
</feature>
<feature type="transmembrane region" description="Helical" evidence="2">
    <location>
        <begin position="281"/>
        <end position="303"/>
    </location>
</feature>
<feature type="topological domain" description="Extracellular" evidence="2">
    <location>
        <begin position="304"/>
        <end position="326"/>
    </location>
</feature>
<feature type="splice variant" id="VSP_030007" description="In isoform 2." evidence="3">
    <original>NVSVAYIGMLVGGDYIFS</original>
    <variation>HGRWFKIFLFNTQQPVET</variation>
    <location>
        <begin position="266"/>
        <end position="283"/>
    </location>
</feature>
<feature type="splice variant" id="VSP_030008" description="In isoform 2." evidence="3">
    <location>
        <begin position="284"/>
        <end position="326"/>
    </location>
</feature>
<feature type="sequence conflict" description="In Ref. 2; BAE34855." evidence="4" ref="2">
    <original>V</original>
    <variation>I</variation>
    <location>
        <position position="162"/>
    </location>
</feature>
<dbReference type="EMBL" id="AB117931">
    <property type="protein sequence ID" value="BAD18884.1"/>
    <property type="molecule type" value="mRNA"/>
</dbReference>
<dbReference type="EMBL" id="AB117932">
    <property type="protein sequence ID" value="BAD18885.1"/>
    <property type="molecule type" value="mRNA"/>
</dbReference>
<dbReference type="EMBL" id="AK154257">
    <property type="protein sequence ID" value="BAE32469.1"/>
    <property type="molecule type" value="mRNA"/>
</dbReference>
<dbReference type="EMBL" id="AK159148">
    <property type="protein sequence ID" value="BAE34855.1"/>
    <property type="molecule type" value="mRNA"/>
</dbReference>
<dbReference type="EMBL" id="BC046402">
    <property type="protein sequence ID" value="AAH46402.1"/>
    <property type="molecule type" value="mRNA"/>
</dbReference>
<dbReference type="EMBL" id="BC107211">
    <property type="protein sequence ID" value="AAI07212.1"/>
    <property type="molecule type" value="mRNA"/>
</dbReference>
<dbReference type="CCDS" id="CCDS26595.1">
    <molecule id="Q762D5-1"/>
</dbReference>
<dbReference type="RefSeq" id="NP_001001321.2">
    <property type="nucleotide sequence ID" value="NM_001001321.3"/>
</dbReference>
<dbReference type="SMR" id="Q762D5"/>
<dbReference type="FunCoup" id="Q762D5">
    <property type="interactions" value="448"/>
</dbReference>
<dbReference type="STRING" id="10090.ENSMUSP00000097040"/>
<dbReference type="PaxDb" id="10090-ENSMUSP00000097040"/>
<dbReference type="ProteomicsDB" id="256675">
    <molecule id="Q762D5-1"/>
</dbReference>
<dbReference type="ProteomicsDB" id="256676">
    <molecule id="Q762D5-2"/>
</dbReference>
<dbReference type="DNASU" id="70484"/>
<dbReference type="GeneID" id="70484"/>
<dbReference type="KEGG" id="mmu:70484"/>
<dbReference type="UCSC" id="uc007qyg.1">
    <molecule id="Q762D5-1"/>
    <property type="organism name" value="mouse"/>
</dbReference>
<dbReference type="UCSC" id="uc007qyi.1">
    <molecule id="Q762D5-2"/>
    <property type="organism name" value="mouse"/>
</dbReference>
<dbReference type="AGR" id="MGI:1917734"/>
<dbReference type="CTD" id="11046"/>
<dbReference type="MGI" id="MGI:1917734">
    <property type="gene designation" value="Slc35d2"/>
</dbReference>
<dbReference type="eggNOG" id="KOG1444">
    <property type="taxonomic scope" value="Eukaryota"/>
</dbReference>
<dbReference type="InParanoid" id="Q762D5"/>
<dbReference type="OrthoDB" id="417037at2759"/>
<dbReference type="PhylomeDB" id="Q762D5"/>
<dbReference type="TreeFam" id="TF313307"/>
<dbReference type="Reactome" id="R-MMU-2022854">
    <property type="pathway name" value="Keratan sulfate biosynthesis"/>
</dbReference>
<dbReference type="Reactome" id="R-MMU-2022928">
    <property type="pathway name" value="HS-GAG biosynthesis"/>
</dbReference>
<dbReference type="Reactome" id="R-MMU-727802">
    <property type="pathway name" value="Transport of nucleotide sugars"/>
</dbReference>
<dbReference type="BioGRID-ORCS" id="70484">
    <property type="hits" value="3 hits in 78 CRISPR screens"/>
</dbReference>
<dbReference type="ChiTaRS" id="Slc35d2">
    <property type="organism name" value="mouse"/>
</dbReference>
<dbReference type="PRO" id="PR:Q762D5"/>
<dbReference type="Proteomes" id="UP000000589">
    <property type="component" value="Unplaced"/>
</dbReference>
<dbReference type="RNAct" id="Q762D5">
    <property type="molecule type" value="protein"/>
</dbReference>
<dbReference type="GO" id="GO:0005794">
    <property type="term" value="C:Golgi apparatus"/>
    <property type="evidence" value="ECO:0000266"/>
    <property type="project" value="MGI"/>
</dbReference>
<dbReference type="GO" id="GO:0000139">
    <property type="term" value="C:Golgi membrane"/>
    <property type="evidence" value="ECO:0000250"/>
    <property type="project" value="UniProtKB"/>
</dbReference>
<dbReference type="GO" id="GO:0015297">
    <property type="term" value="F:antiporter activity"/>
    <property type="evidence" value="ECO:0007669"/>
    <property type="project" value="UniProtKB-KW"/>
</dbReference>
<dbReference type="GO" id="GO:0005338">
    <property type="term" value="F:nucleotide-sugar transmembrane transporter activity"/>
    <property type="evidence" value="ECO:0000250"/>
    <property type="project" value="UniProtKB"/>
</dbReference>
<dbReference type="GO" id="GO:0005460">
    <property type="term" value="F:UDP-glucose transmembrane transporter activity"/>
    <property type="evidence" value="ECO:0000266"/>
    <property type="project" value="MGI"/>
</dbReference>
<dbReference type="GO" id="GO:0005462">
    <property type="term" value="F:UDP-N-acetylglucosamine transmembrane transporter activity"/>
    <property type="evidence" value="ECO:0000266"/>
    <property type="project" value="MGI"/>
</dbReference>
<dbReference type="GO" id="GO:0015012">
    <property type="term" value="P:heparan sulfate proteoglycan biosynthetic process"/>
    <property type="evidence" value="ECO:0000250"/>
    <property type="project" value="UniProtKB"/>
</dbReference>
<dbReference type="InterPro" id="IPR004853">
    <property type="entry name" value="Sugar_P_trans_dom"/>
</dbReference>
<dbReference type="InterPro" id="IPR050186">
    <property type="entry name" value="TPT_transporter"/>
</dbReference>
<dbReference type="PANTHER" id="PTHR11132">
    <property type="entry name" value="SOLUTE CARRIER FAMILY 35"/>
    <property type="match status" value="1"/>
</dbReference>
<dbReference type="Pfam" id="PF03151">
    <property type="entry name" value="TPT"/>
    <property type="match status" value="1"/>
</dbReference>
<evidence type="ECO:0000250" key="1">
    <source>
        <dbReference type="UniProtKB" id="Q76EJ3"/>
    </source>
</evidence>
<evidence type="ECO:0000255" key="2"/>
<evidence type="ECO:0000303" key="3">
    <source ref="1"/>
</evidence>
<evidence type="ECO:0000305" key="4"/>
<evidence type="ECO:0000312" key="5">
    <source>
        <dbReference type="EMBL" id="BAD18884.1"/>
    </source>
</evidence>
<evidence type="ECO:0000312" key="6">
    <source>
        <dbReference type="MGI" id="MGI:1917734"/>
    </source>
</evidence>
<keyword id="KW-0025">Alternative splicing</keyword>
<keyword id="KW-0050">Antiport</keyword>
<keyword id="KW-0333">Golgi apparatus</keyword>
<keyword id="KW-0472">Membrane</keyword>
<keyword id="KW-1185">Reference proteome</keyword>
<keyword id="KW-0762">Sugar transport</keyword>
<keyword id="KW-0812">Transmembrane</keyword>
<keyword id="KW-1133">Transmembrane helix</keyword>
<keyword id="KW-0813">Transport</keyword>